<comment type="function">
    <text evidence="1">Negative regulator of FtsZ ring formation; modulates the frequency and position of FtsZ ring formation. Inhibits FtsZ ring formation at polar sites. Interacts either with FtsZ or with one of its binding partners to promote depolymerization.</text>
</comment>
<comment type="subcellular location">
    <subcellularLocation>
        <location evidence="1">Cell membrane</location>
        <topology evidence="1">Single-pass membrane protein</topology>
    </subcellularLocation>
    <text evidence="1">Colocalized with FtsZ to the nascent septal site.</text>
</comment>
<comment type="similarity">
    <text evidence="1">Belongs to the EzrA family.</text>
</comment>
<organism>
    <name type="scientific">Streptococcus gordonii (strain Challis / ATCC 35105 / BCRC 15272 / CH1 / DL1 / V288)</name>
    <dbReference type="NCBI Taxonomy" id="467705"/>
    <lineage>
        <taxon>Bacteria</taxon>
        <taxon>Bacillati</taxon>
        <taxon>Bacillota</taxon>
        <taxon>Bacilli</taxon>
        <taxon>Lactobacillales</taxon>
        <taxon>Streptococcaceae</taxon>
        <taxon>Streptococcus</taxon>
    </lineage>
</organism>
<gene>
    <name evidence="1" type="primary">ezrA</name>
    <name type="ordered locus">SGO_1431</name>
</gene>
<keyword id="KW-0131">Cell cycle</keyword>
<keyword id="KW-0132">Cell division</keyword>
<keyword id="KW-1003">Cell membrane</keyword>
<keyword id="KW-0175">Coiled coil</keyword>
<keyword id="KW-0472">Membrane</keyword>
<keyword id="KW-1185">Reference proteome</keyword>
<keyword id="KW-0717">Septation</keyword>
<keyword id="KW-0812">Transmembrane</keyword>
<keyword id="KW-1133">Transmembrane helix</keyword>
<evidence type="ECO:0000255" key="1">
    <source>
        <dbReference type="HAMAP-Rule" id="MF_00728"/>
    </source>
</evidence>
<protein>
    <recommendedName>
        <fullName evidence="1">Septation ring formation regulator EzrA</fullName>
    </recommendedName>
</protein>
<name>EZRA_STRGC</name>
<sequence length="574" mass="66274">MSNGLIILIIVIAVALILAYVAAVVLRKRNETLLDSLEERKEKLYNLPVNDEVEAIKNMHLIGQSQVTFREWNQKWVDLSLNSFADIENNIFEAEGYNNSFRFLKAKHAIDSIESQINLVEEDIELIREALADLEKQEAKNSGRVLHALELFENLQVKVAEDTEKYGPAVQEIQKQLQNIESEFSQFVTLNSSGDPVEAADILDKTENHILALTHIVDKVPSIVTELREVLPDQLEDLESGYRKLVEAGYHFVETDIESRFSQLHSNITQNYENIAALELDNAQYENTQIQEEINALYDIFTREIAAQKVVEKLQENLPAYLKHTKENNQHLQSELDRLSKMYLLSDEEDEKVRDLQSELSALEAVVLATVEDSAENKQAYSLTQEALEATQERLKEIEDEQITLGERLERIEKDDDNARQKVNIYINKLHTIKRYMEKRNLPGIPKSFLSLFFTASDHTEALLTELEQLRVNIDNVNLLLENVTNDIHDLETETYQIVQYATLTEQLLQYSNRYRSFDQSIQEAFNKALDIFENQFDYESSFEVISQALEVVEPGVTSRFVTSYEKTRENIRF</sequence>
<proteinExistence type="inferred from homology"/>
<dbReference type="EMBL" id="CP000725">
    <property type="protein sequence ID" value="ABV09556.1"/>
    <property type="molecule type" value="Genomic_DNA"/>
</dbReference>
<dbReference type="RefSeq" id="WP_012130512.1">
    <property type="nucleotide sequence ID" value="NC_009785.1"/>
</dbReference>
<dbReference type="SMR" id="A8AY51"/>
<dbReference type="STRING" id="467705.SGO_1431"/>
<dbReference type="KEGG" id="sgo:SGO_1431"/>
<dbReference type="eggNOG" id="COG4477">
    <property type="taxonomic scope" value="Bacteria"/>
</dbReference>
<dbReference type="HOGENOM" id="CLU_034079_2_0_9"/>
<dbReference type="Proteomes" id="UP000001131">
    <property type="component" value="Chromosome"/>
</dbReference>
<dbReference type="GO" id="GO:0005886">
    <property type="term" value="C:plasma membrane"/>
    <property type="evidence" value="ECO:0007669"/>
    <property type="project" value="UniProtKB-SubCell"/>
</dbReference>
<dbReference type="GO" id="GO:0005940">
    <property type="term" value="C:septin ring"/>
    <property type="evidence" value="ECO:0007669"/>
    <property type="project" value="InterPro"/>
</dbReference>
<dbReference type="GO" id="GO:0000917">
    <property type="term" value="P:division septum assembly"/>
    <property type="evidence" value="ECO:0007669"/>
    <property type="project" value="UniProtKB-KW"/>
</dbReference>
<dbReference type="GO" id="GO:0000921">
    <property type="term" value="P:septin ring assembly"/>
    <property type="evidence" value="ECO:0007669"/>
    <property type="project" value="InterPro"/>
</dbReference>
<dbReference type="HAMAP" id="MF_00728">
    <property type="entry name" value="EzrA"/>
    <property type="match status" value="1"/>
</dbReference>
<dbReference type="InterPro" id="IPR010379">
    <property type="entry name" value="EzrA"/>
</dbReference>
<dbReference type="NCBIfam" id="NF003410">
    <property type="entry name" value="PRK04778.1-4"/>
    <property type="match status" value="1"/>
</dbReference>
<dbReference type="Pfam" id="PF06160">
    <property type="entry name" value="EzrA"/>
    <property type="match status" value="1"/>
</dbReference>
<reference key="1">
    <citation type="journal article" date="2007" name="J. Bacteriol.">
        <title>Genome-wide transcriptional changes in Streptococcus gordonii in response to competence signaling peptide.</title>
        <authorList>
            <person name="Vickerman M.M."/>
            <person name="Iobst S."/>
            <person name="Jesionowski A.M."/>
            <person name="Gill S.R."/>
        </authorList>
    </citation>
    <scope>NUCLEOTIDE SEQUENCE [LARGE SCALE GENOMIC DNA]</scope>
    <source>
        <strain>Challis / ATCC 35105 / BCRC 15272 / CH1 / DL1 / V288</strain>
    </source>
</reference>
<accession>A8AY51</accession>
<feature type="chain" id="PRO_1000083322" description="Septation ring formation regulator EzrA">
    <location>
        <begin position="1"/>
        <end position="574"/>
    </location>
</feature>
<feature type="topological domain" description="Extracellular" evidence="1">
    <location>
        <begin position="1"/>
        <end position="7"/>
    </location>
</feature>
<feature type="transmembrane region" description="Helical" evidence="1">
    <location>
        <begin position="8"/>
        <end position="26"/>
    </location>
</feature>
<feature type="topological domain" description="Cytoplasmic" evidence="1">
    <location>
        <begin position="27"/>
        <end position="574"/>
    </location>
</feature>
<feature type="coiled-coil region" evidence="1">
    <location>
        <begin position="104"/>
        <end position="141"/>
    </location>
</feature>
<feature type="coiled-coil region" evidence="1">
    <location>
        <begin position="267"/>
        <end position="424"/>
    </location>
</feature>
<feature type="coiled-coil region" evidence="1">
    <location>
        <begin position="456"/>
        <end position="524"/>
    </location>
</feature>